<accession>Q02225</accession>
<protein>
    <recommendedName>
        <fullName>Ski oncogene</fullName>
    </recommendedName>
    <alternativeName>
        <fullName>Proto-oncogene c-Ski</fullName>
    </alternativeName>
</protein>
<comment type="function">
    <text evidence="1">May play a role in terminal differentiation of skeletal muscle cells but not in the determination of cells to the myogenic lineage. May function in TGF-beta signaling (By similarity).</text>
</comment>
<comment type="subcellular location">
    <subcellularLocation>
        <location>Nucleus</location>
    </subcellularLocation>
</comment>
<comment type="tissue specificity">
    <text>High levels of the protein are found in the lungs and ovary with intermediate levels of expression in the heart, spleen and brain. Low expression levels are found in the liver, kidney, testis, intestine and blood while no expression is found in muscle, skin, stomach, eyes or nerves.</text>
</comment>
<comment type="developmental stage">
    <text>The protein is expressed in oocytes as they develop. After fertilization, the level of expression remains high over the rapid cleavage stages, then decreases during the mid-blastula transition to a low level which is maintained throughout the later developmental stages.</text>
</comment>
<comment type="similarity">
    <text evidence="3">Belongs to the SKI family.</text>
</comment>
<dbReference type="EMBL" id="X68683">
    <property type="protein sequence ID" value="CAA48642.1"/>
    <property type="molecule type" value="mRNA"/>
</dbReference>
<dbReference type="PIR" id="I51644">
    <property type="entry name" value="S29923"/>
</dbReference>
<dbReference type="RefSeq" id="NP_001080930.1">
    <property type="nucleotide sequence ID" value="NM_001087461.1"/>
</dbReference>
<dbReference type="SMR" id="Q02225"/>
<dbReference type="DNASU" id="394271"/>
<dbReference type="GeneID" id="394271"/>
<dbReference type="KEGG" id="xla:394271"/>
<dbReference type="AGR" id="Xenbase:XB-GENE-6254672"/>
<dbReference type="CTD" id="394271"/>
<dbReference type="Xenbase" id="XB-GENE-6254672">
    <property type="gene designation" value="ski.S"/>
</dbReference>
<dbReference type="OrthoDB" id="3938623at2759"/>
<dbReference type="Proteomes" id="UP000186698">
    <property type="component" value="Chromosome 7S"/>
</dbReference>
<dbReference type="Bgee" id="394271">
    <property type="expression patterns" value="Expressed in internal ear and 19 other cell types or tissues"/>
</dbReference>
<dbReference type="GO" id="GO:0005737">
    <property type="term" value="C:cytoplasm"/>
    <property type="evidence" value="ECO:0000318"/>
    <property type="project" value="GO_Central"/>
</dbReference>
<dbReference type="GO" id="GO:0005634">
    <property type="term" value="C:nucleus"/>
    <property type="evidence" value="ECO:0000318"/>
    <property type="project" value="GO_Central"/>
</dbReference>
<dbReference type="GO" id="GO:0005667">
    <property type="term" value="C:transcription regulator complex"/>
    <property type="evidence" value="ECO:0000318"/>
    <property type="project" value="GO_Central"/>
</dbReference>
<dbReference type="GO" id="GO:0000981">
    <property type="term" value="F:DNA-binding transcription factor activity, RNA polymerase II-specific"/>
    <property type="evidence" value="ECO:0000318"/>
    <property type="project" value="GO_Central"/>
</dbReference>
<dbReference type="GO" id="GO:0000978">
    <property type="term" value="F:RNA polymerase II cis-regulatory region sequence-specific DNA binding"/>
    <property type="evidence" value="ECO:0000318"/>
    <property type="project" value="GO_Central"/>
</dbReference>
<dbReference type="GO" id="GO:0046332">
    <property type="term" value="F:SMAD binding"/>
    <property type="evidence" value="ECO:0000318"/>
    <property type="project" value="GO_Central"/>
</dbReference>
<dbReference type="GO" id="GO:0030514">
    <property type="term" value="P:negative regulation of BMP signaling pathway"/>
    <property type="evidence" value="ECO:0000318"/>
    <property type="project" value="GO_Central"/>
</dbReference>
<dbReference type="GO" id="GO:0000122">
    <property type="term" value="P:negative regulation of transcription by RNA polymerase II"/>
    <property type="evidence" value="ECO:0000318"/>
    <property type="project" value="GO_Central"/>
</dbReference>
<dbReference type="GO" id="GO:0030512">
    <property type="term" value="P:negative regulation of transforming growth factor beta receptor signaling pathway"/>
    <property type="evidence" value="ECO:0000318"/>
    <property type="project" value="GO_Central"/>
</dbReference>
<dbReference type="CDD" id="cd21083">
    <property type="entry name" value="DHD_Ski"/>
    <property type="match status" value="1"/>
</dbReference>
<dbReference type="FunFam" id="3.10.390.10:FF:000002">
    <property type="entry name" value="Putative ski oncogene"/>
    <property type="match status" value="1"/>
</dbReference>
<dbReference type="FunFam" id="3.10.260.20:FF:000002">
    <property type="entry name" value="SKI-like oncogene a"/>
    <property type="match status" value="1"/>
</dbReference>
<dbReference type="Gene3D" id="3.10.390.10">
    <property type="entry name" value="SAND domain-like"/>
    <property type="match status" value="1"/>
</dbReference>
<dbReference type="Gene3D" id="3.10.260.20">
    <property type="entry name" value="Ski"/>
    <property type="match status" value="1"/>
</dbReference>
<dbReference type="InterPro" id="IPR014890">
    <property type="entry name" value="c-SKI_SMAD4-bd_dom"/>
</dbReference>
<dbReference type="InterPro" id="IPR047315">
    <property type="entry name" value="DHD_Ski"/>
</dbReference>
<dbReference type="InterPro" id="IPR009061">
    <property type="entry name" value="DNA-bd_dom_put_sf"/>
</dbReference>
<dbReference type="InterPro" id="IPR010919">
    <property type="entry name" value="SAND-like_dom_sf"/>
</dbReference>
<dbReference type="InterPro" id="IPR003380">
    <property type="entry name" value="SKI/SNO/DAC"/>
</dbReference>
<dbReference type="InterPro" id="IPR037000">
    <property type="entry name" value="Ski_DNA-bd_sf"/>
</dbReference>
<dbReference type="InterPro" id="IPR023216">
    <property type="entry name" value="Tscrpt_reg_SKI_SnoN"/>
</dbReference>
<dbReference type="PANTHER" id="PTHR10005:SF15">
    <property type="entry name" value="SKI ONCOGENE"/>
    <property type="match status" value="1"/>
</dbReference>
<dbReference type="PANTHER" id="PTHR10005">
    <property type="entry name" value="SKI ONCOGENE-RELATED"/>
    <property type="match status" value="1"/>
</dbReference>
<dbReference type="Pfam" id="PF08782">
    <property type="entry name" value="c-SKI_SMAD_bind"/>
    <property type="match status" value="1"/>
</dbReference>
<dbReference type="Pfam" id="PF02437">
    <property type="entry name" value="Ski_Sno_DHD"/>
    <property type="match status" value="1"/>
</dbReference>
<dbReference type="SMART" id="SM01046">
    <property type="entry name" value="c-SKI_SMAD_bind"/>
    <property type="match status" value="1"/>
</dbReference>
<dbReference type="SUPFAM" id="SSF46955">
    <property type="entry name" value="Putative DNA-binding domain"/>
    <property type="match status" value="1"/>
</dbReference>
<dbReference type="SUPFAM" id="SSF63763">
    <property type="entry name" value="SAND domain-like"/>
    <property type="match status" value="1"/>
</dbReference>
<proteinExistence type="evidence at transcript level"/>
<keyword id="KW-0175">Coiled coil</keyword>
<keyword id="KW-0539">Nucleus</keyword>
<keyword id="KW-0656">Proto-oncogene</keyword>
<keyword id="KW-1185">Reference proteome</keyword>
<keyword id="KW-0677">Repeat</keyword>
<evidence type="ECO:0000250" key="1"/>
<evidence type="ECO:0000256" key="2">
    <source>
        <dbReference type="SAM" id="MobiDB-lite"/>
    </source>
</evidence>
<evidence type="ECO:0000305" key="3"/>
<reference key="1">
    <citation type="journal article" date="1993" name="Oncogene">
        <title>Xenopus c-ski contains a novel coiled-coil protein domain, and is maternally expressed during development.</title>
        <authorList>
            <person name="Sleeman J.P."/>
            <person name="Laskey R.A."/>
        </authorList>
    </citation>
    <scope>NUCLEOTIDE SEQUENCE [MRNA]</scope>
    <source>
        <tissue>Oocyte</tissue>
    </source>
</reference>
<name>SKI_XENLA</name>
<gene>
    <name type="primary">ski</name>
</gene>
<sequence>METVSRSSFQPHAGLQKTLEQFHLSSMSSLGGPAAFSARWTQDLYKKECGKEPPEPILHLPSQPPPVIPGGPLFMPSDRSTERCETILEGETISCFVVGGEKRLCLPQILNSVLRDFSLQQINAVCDELHVYCSRCTADQLEILKVMGILPFSAPSCGLITKTDAERLCNALMYGGSYPPRCAKKSDFPPGPLELELTEGSFKVYHECFGKCRGLFVPELYGHPSAPCIQCLDCRLMYPPHKFVVHSHKALENRTCHWGFDSANWRAYILLARDGVGGDDELARLGRLLEEIKEKFDYSNKYKRKAARLSSEPVAKKAKADDSIIHSPSSAEKDKSSSWLRNLSNINKNAGYVHPRQRLSAFRPWSPAISANDKELSTHLPALIRDSFYNYKSFENLVAPNVALTPPVQQKVITSPPCVPAVPRSTQSSGSPPQSRKRRPTAELPIVPEAPAPPVPIREEEKESETEIEVESREECTFTSSLSSLSSPSFTSSSSAKELSSPGMLAPTVINTSYEVASHNDQHCSGLEAELEHLKQALDSGLDSKEAKEKFLHEVVKMRVKQEEKLNAALQAKRSLQQELEFLRVAKKEKLREATEAKRNLRKEIERLRAEHEKKMKEANESRLRLKRELEQARQIRVCDKGCEAGRIRVKYSAQIEELQSKLQHAENDREQLRTDLVHEREAREHLEKVVKDLQEQLWSKTSHLPSSEHTRKDIEN</sequence>
<organism>
    <name type="scientific">Xenopus laevis</name>
    <name type="common">African clawed frog</name>
    <dbReference type="NCBI Taxonomy" id="8355"/>
    <lineage>
        <taxon>Eukaryota</taxon>
        <taxon>Metazoa</taxon>
        <taxon>Chordata</taxon>
        <taxon>Craniata</taxon>
        <taxon>Vertebrata</taxon>
        <taxon>Euteleostomi</taxon>
        <taxon>Amphibia</taxon>
        <taxon>Batrachia</taxon>
        <taxon>Anura</taxon>
        <taxon>Pipoidea</taxon>
        <taxon>Pipidae</taxon>
        <taxon>Xenopodinae</taxon>
        <taxon>Xenopus</taxon>
        <taxon>Xenopus</taxon>
    </lineage>
</organism>
<feature type="chain" id="PRO_0000129385" description="Ski oncogene">
    <location>
        <begin position="1"/>
        <end position="717"/>
    </location>
</feature>
<feature type="repeat" description="1">
    <location>
        <begin position="527"/>
        <end position="550"/>
    </location>
</feature>
<feature type="repeat" description="2">
    <location>
        <begin position="551"/>
        <end position="575"/>
    </location>
</feature>
<feature type="repeat" description="3">
    <location>
        <begin position="576"/>
        <end position="600"/>
    </location>
</feature>
<feature type="repeat" description="4">
    <location>
        <begin position="601"/>
        <end position="625"/>
    </location>
</feature>
<feature type="region of interest" description="Disordered" evidence="2">
    <location>
        <begin position="415"/>
        <end position="502"/>
    </location>
</feature>
<feature type="region of interest" description="4 X 25 AA approximate tandem repeats">
    <location>
        <begin position="527"/>
        <end position="625"/>
    </location>
</feature>
<feature type="region of interest" description="Disordered" evidence="2">
    <location>
        <begin position="698"/>
        <end position="717"/>
    </location>
</feature>
<feature type="coiled-coil region">
    <location>
        <begin position="524"/>
        <end position="700"/>
    </location>
</feature>
<feature type="compositionally biased region" description="Polar residues" evidence="2">
    <location>
        <begin position="424"/>
        <end position="434"/>
    </location>
</feature>
<feature type="compositionally biased region" description="Low complexity" evidence="2">
    <location>
        <begin position="477"/>
        <end position="495"/>
    </location>
</feature>
<feature type="compositionally biased region" description="Basic and acidic residues" evidence="2">
    <location>
        <begin position="707"/>
        <end position="717"/>
    </location>
</feature>